<organism>
    <name type="scientific">Rattus norvegicus</name>
    <name type="common">Rat</name>
    <dbReference type="NCBI Taxonomy" id="10116"/>
    <lineage>
        <taxon>Eukaryota</taxon>
        <taxon>Metazoa</taxon>
        <taxon>Chordata</taxon>
        <taxon>Craniata</taxon>
        <taxon>Vertebrata</taxon>
        <taxon>Euteleostomi</taxon>
        <taxon>Mammalia</taxon>
        <taxon>Eutheria</taxon>
        <taxon>Euarchontoglires</taxon>
        <taxon>Glires</taxon>
        <taxon>Rodentia</taxon>
        <taxon>Myomorpha</taxon>
        <taxon>Muroidea</taxon>
        <taxon>Muridae</taxon>
        <taxon>Murinae</taxon>
        <taxon>Rattus</taxon>
    </lineage>
</organism>
<dbReference type="EC" id="2.7.11.1"/>
<dbReference type="EC" id="2.7.11.26"/>
<dbReference type="EMBL" id="AB365521">
    <property type="protein sequence ID" value="BAG28183.1"/>
    <property type="molecule type" value="mRNA"/>
</dbReference>
<dbReference type="RefSeq" id="NP_001120809.1">
    <property type="nucleotide sequence ID" value="NM_001127337.1"/>
</dbReference>
<dbReference type="SMR" id="B2DD29"/>
<dbReference type="BioGRID" id="270382">
    <property type="interactions" value="2"/>
</dbReference>
<dbReference type="FunCoup" id="B2DD29">
    <property type="interactions" value="1808"/>
</dbReference>
<dbReference type="IntAct" id="B2DD29">
    <property type="interactions" value="1"/>
</dbReference>
<dbReference type="STRING" id="10116.ENSRNOP00000033679"/>
<dbReference type="GlyGen" id="B2DD29">
    <property type="glycosylation" value="1 site"/>
</dbReference>
<dbReference type="iPTMnet" id="B2DD29"/>
<dbReference type="PhosphoSitePlus" id="B2DD29"/>
<dbReference type="PaxDb" id="10116-ENSRNOP00000033679"/>
<dbReference type="Ensembl" id="ENSRNOT00000097053.1">
    <property type="protein sequence ID" value="ENSRNOP00000087514.1"/>
    <property type="gene ID" value="ENSRNOG00000017673.8"/>
</dbReference>
<dbReference type="GeneID" id="499073"/>
<dbReference type="KEGG" id="rno:499073"/>
<dbReference type="UCSC" id="RGD:1563268">
    <property type="organism name" value="rat"/>
</dbReference>
<dbReference type="AGR" id="RGD:1563268"/>
<dbReference type="CTD" id="84446"/>
<dbReference type="RGD" id="1563268">
    <property type="gene designation" value="Brsk1"/>
</dbReference>
<dbReference type="eggNOG" id="KOG0588">
    <property type="taxonomic scope" value="Eukaryota"/>
</dbReference>
<dbReference type="GeneTree" id="ENSGT00940000161254"/>
<dbReference type="HOGENOM" id="CLU_000288_156_2_1"/>
<dbReference type="InParanoid" id="B2DD29"/>
<dbReference type="OMA" id="QHSQRNR"/>
<dbReference type="OrthoDB" id="193931at2759"/>
<dbReference type="PhylomeDB" id="B2DD29"/>
<dbReference type="PRO" id="PR:B2DD29"/>
<dbReference type="Proteomes" id="UP000002494">
    <property type="component" value="Chromosome 1"/>
</dbReference>
<dbReference type="Bgee" id="ENSRNOG00000017673">
    <property type="expression patterns" value="Expressed in frontal cortex and 19 other cell types or tissues"/>
</dbReference>
<dbReference type="GO" id="GO:0005813">
    <property type="term" value="C:centrosome"/>
    <property type="evidence" value="ECO:0000250"/>
    <property type="project" value="UniProtKB"/>
</dbReference>
<dbReference type="GO" id="GO:0098981">
    <property type="term" value="C:cholinergic synapse"/>
    <property type="evidence" value="ECO:0000314"/>
    <property type="project" value="SynGO"/>
</dbReference>
<dbReference type="GO" id="GO:0005737">
    <property type="term" value="C:cytoplasm"/>
    <property type="evidence" value="ECO:0000266"/>
    <property type="project" value="RGD"/>
</dbReference>
<dbReference type="GO" id="GO:0150034">
    <property type="term" value="C:distal axon"/>
    <property type="evidence" value="ECO:0000315"/>
    <property type="project" value="ARUK-UCL"/>
</dbReference>
<dbReference type="GO" id="GO:0005654">
    <property type="term" value="C:nucleoplasm"/>
    <property type="evidence" value="ECO:0007669"/>
    <property type="project" value="Ensembl"/>
</dbReference>
<dbReference type="GO" id="GO:0005634">
    <property type="term" value="C:nucleus"/>
    <property type="evidence" value="ECO:0000266"/>
    <property type="project" value="RGD"/>
</dbReference>
<dbReference type="GO" id="GO:0014069">
    <property type="term" value="C:postsynaptic density"/>
    <property type="evidence" value="ECO:0000314"/>
    <property type="project" value="SynGO"/>
</dbReference>
<dbReference type="GO" id="GO:0048786">
    <property type="term" value="C:presynaptic active zone"/>
    <property type="evidence" value="ECO:0007669"/>
    <property type="project" value="UniProtKB-SubCell"/>
</dbReference>
<dbReference type="GO" id="GO:0008021">
    <property type="term" value="C:synaptic vesicle"/>
    <property type="evidence" value="ECO:0000314"/>
    <property type="project" value="UniProtKB"/>
</dbReference>
<dbReference type="GO" id="GO:0005524">
    <property type="term" value="F:ATP binding"/>
    <property type="evidence" value="ECO:0007669"/>
    <property type="project" value="UniProtKB-KW"/>
</dbReference>
<dbReference type="GO" id="GO:0043015">
    <property type="term" value="F:gamma-tubulin binding"/>
    <property type="evidence" value="ECO:0000250"/>
    <property type="project" value="UniProtKB"/>
</dbReference>
<dbReference type="GO" id="GO:0000287">
    <property type="term" value="F:magnesium ion binding"/>
    <property type="evidence" value="ECO:0000266"/>
    <property type="project" value="RGD"/>
</dbReference>
<dbReference type="GO" id="GO:0140678">
    <property type="term" value="F:molecular function inhibitor activity"/>
    <property type="evidence" value="ECO:0000266"/>
    <property type="project" value="RGD"/>
</dbReference>
<dbReference type="GO" id="GO:0019901">
    <property type="term" value="F:protein kinase binding"/>
    <property type="evidence" value="ECO:0000266"/>
    <property type="project" value="RGD"/>
</dbReference>
<dbReference type="GO" id="GO:0106310">
    <property type="term" value="F:protein serine kinase activity"/>
    <property type="evidence" value="ECO:0007669"/>
    <property type="project" value="RHEA"/>
</dbReference>
<dbReference type="GO" id="GO:0004674">
    <property type="term" value="F:protein serine/threonine kinase activity"/>
    <property type="evidence" value="ECO:0000314"/>
    <property type="project" value="UniProtKB"/>
</dbReference>
<dbReference type="GO" id="GO:0050321">
    <property type="term" value="F:tau-protein kinase activity"/>
    <property type="evidence" value="ECO:0000250"/>
    <property type="project" value="UniProtKB"/>
</dbReference>
<dbReference type="GO" id="GO:0008306">
    <property type="term" value="P:associative learning"/>
    <property type="evidence" value="ECO:0000266"/>
    <property type="project" value="RGD"/>
</dbReference>
<dbReference type="GO" id="GO:0007409">
    <property type="term" value="P:axonogenesis"/>
    <property type="evidence" value="ECO:0000250"/>
    <property type="project" value="UniProtKB"/>
</dbReference>
<dbReference type="GO" id="GO:0021953">
    <property type="term" value="P:central nervous system neuron differentiation"/>
    <property type="evidence" value="ECO:0007669"/>
    <property type="project" value="Ensembl"/>
</dbReference>
<dbReference type="GO" id="GO:0051298">
    <property type="term" value="P:centrosome duplication"/>
    <property type="evidence" value="ECO:0000250"/>
    <property type="project" value="UniProtKB"/>
</dbReference>
<dbReference type="GO" id="GO:0006974">
    <property type="term" value="P:DNA damage response"/>
    <property type="evidence" value="ECO:0000266"/>
    <property type="project" value="RGD"/>
</dbReference>
<dbReference type="GO" id="GO:0030010">
    <property type="term" value="P:establishment of cell polarity"/>
    <property type="evidence" value="ECO:0000250"/>
    <property type="project" value="UniProtKB"/>
</dbReference>
<dbReference type="GO" id="GO:0000086">
    <property type="term" value="P:G2/M transition of mitotic cell cycle"/>
    <property type="evidence" value="ECO:0000266"/>
    <property type="project" value="RGD"/>
</dbReference>
<dbReference type="GO" id="GO:0090176">
    <property type="term" value="P:microtubule cytoskeleton organization involved in establishment of planar polarity"/>
    <property type="evidence" value="ECO:0000266"/>
    <property type="project" value="RGD"/>
</dbReference>
<dbReference type="GO" id="GO:0007095">
    <property type="term" value="P:mitotic G2 DNA damage checkpoint signaling"/>
    <property type="evidence" value="ECO:0000266"/>
    <property type="project" value="RGD"/>
</dbReference>
<dbReference type="GO" id="GO:0030182">
    <property type="term" value="P:neuron differentiation"/>
    <property type="evidence" value="ECO:0000266"/>
    <property type="project" value="RGD"/>
</dbReference>
<dbReference type="GO" id="GO:0048812">
    <property type="term" value="P:neuron projection morphogenesis"/>
    <property type="evidence" value="ECO:0000266"/>
    <property type="project" value="RGD"/>
</dbReference>
<dbReference type="GO" id="GO:0007269">
    <property type="term" value="P:neurotransmitter secretion"/>
    <property type="evidence" value="ECO:0000315"/>
    <property type="project" value="UniProtKB"/>
</dbReference>
<dbReference type="GO" id="GO:0046777">
    <property type="term" value="P:protein autophosphorylation"/>
    <property type="evidence" value="ECO:0000304"/>
    <property type="project" value="UniProtKB"/>
</dbReference>
<dbReference type="GO" id="GO:0050770">
    <property type="term" value="P:regulation of axonogenesis"/>
    <property type="evidence" value="ECO:0000266"/>
    <property type="project" value="RGD"/>
</dbReference>
<dbReference type="GO" id="GO:0010975">
    <property type="term" value="P:regulation of neuron projection development"/>
    <property type="evidence" value="ECO:0000266"/>
    <property type="project" value="RGD"/>
</dbReference>
<dbReference type="GO" id="GO:0048167">
    <property type="term" value="P:regulation of synaptic plasticity"/>
    <property type="evidence" value="ECO:0000266"/>
    <property type="project" value="RGD"/>
</dbReference>
<dbReference type="GO" id="GO:0010807">
    <property type="term" value="P:regulation of synaptic vesicle priming"/>
    <property type="evidence" value="ECO:0000314"/>
    <property type="project" value="SynGO"/>
</dbReference>
<dbReference type="GO" id="GO:0009411">
    <property type="term" value="P:response to UV"/>
    <property type="evidence" value="ECO:0000266"/>
    <property type="project" value="RGD"/>
</dbReference>
<dbReference type="GO" id="GO:0099504">
    <property type="term" value="P:synaptic vesicle cycle"/>
    <property type="evidence" value="ECO:0000266"/>
    <property type="project" value="RGD"/>
</dbReference>
<dbReference type="CDD" id="cd14081">
    <property type="entry name" value="STKc_BRSK1_2"/>
    <property type="match status" value="1"/>
</dbReference>
<dbReference type="CDD" id="cd14340">
    <property type="entry name" value="UBA_BRSK"/>
    <property type="match status" value="1"/>
</dbReference>
<dbReference type="FunFam" id="1.10.510.10:FF:000064">
    <property type="entry name" value="BR serine/threonine-protein kinase 2"/>
    <property type="match status" value="1"/>
</dbReference>
<dbReference type="FunFam" id="3.30.200.20:FF:000003">
    <property type="entry name" value="Non-specific serine/threonine protein kinase"/>
    <property type="match status" value="1"/>
</dbReference>
<dbReference type="Gene3D" id="1.10.510.10">
    <property type="entry name" value="Transferase(Phosphotransferase) domain 1"/>
    <property type="match status" value="1"/>
</dbReference>
<dbReference type="InterPro" id="IPR048622">
    <property type="entry name" value="BRSK1_2-like_UBA"/>
</dbReference>
<dbReference type="InterPro" id="IPR011009">
    <property type="entry name" value="Kinase-like_dom_sf"/>
</dbReference>
<dbReference type="InterPro" id="IPR000719">
    <property type="entry name" value="Prot_kinase_dom"/>
</dbReference>
<dbReference type="InterPro" id="IPR017441">
    <property type="entry name" value="Protein_kinase_ATP_BS"/>
</dbReference>
<dbReference type="InterPro" id="IPR008271">
    <property type="entry name" value="Ser/Thr_kinase_AS"/>
</dbReference>
<dbReference type="InterPro" id="IPR015940">
    <property type="entry name" value="UBA"/>
</dbReference>
<dbReference type="PANTHER" id="PTHR24346">
    <property type="entry name" value="MAP/MICROTUBULE AFFINITY-REGULATING KINASE"/>
    <property type="match status" value="1"/>
</dbReference>
<dbReference type="PANTHER" id="PTHR24346:SF36">
    <property type="entry name" value="SERINE_THREONINE-PROTEIN KINASE BRSK1 ISOFORM X1-RELATED"/>
    <property type="match status" value="1"/>
</dbReference>
<dbReference type="Pfam" id="PF21122">
    <property type="entry name" value="KA1_BRSK"/>
    <property type="match status" value="1"/>
</dbReference>
<dbReference type="Pfam" id="PF00069">
    <property type="entry name" value="Pkinase"/>
    <property type="match status" value="1"/>
</dbReference>
<dbReference type="Pfam" id="PF21115">
    <property type="entry name" value="UBA_BRSK"/>
    <property type="match status" value="1"/>
</dbReference>
<dbReference type="SMART" id="SM00220">
    <property type="entry name" value="S_TKc"/>
    <property type="match status" value="1"/>
</dbReference>
<dbReference type="SUPFAM" id="SSF56112">
    <property type="entry name" value="Protein kinase-like (PK-like)"/>
    <property type="match status" value="1"/>
</dbReference>
<dbReference type="PROSITE" id="PS00107">
    <property type="entry name" value="PROTEIN_KINASE_ATP"/>
    <property type="match status" value="1"/>
</dbReference>
<dbReference type="PROSITE" id="PS50011">
    <property type="entry name" value="PROTEIN_KINASE_DOM"/>
    <property type="match status" value="1"/>
</dbReference>
<dbReference type="PROSITE" id="PS00108">
    <property type="entry name" value="PROTEIN_KINASE_ST"/>
    <property type="match status" value="1"/>
</dbReference>
<dbReference type="PROSITE" id="PS50030">
    <property type="entry name" value="UBA"/>
    <property type="match status" value="1"/>
</dbReference>
<feature type="chain" id="PRO_0000412649" description="Serine/threonine-protein kinase BRSK1">
    <location>
        <begin position="1"/>
        <end position="778"/>
    </location>
</feature>
<feature type="domain" description="Protein kinase" evidence="3">
    <location>
        <begin position="34"/>
        <end position="285"/>
    </location>
</feature>
<feature type="domain" description="UBA" evidence="4">
    <location>
        <begin position="314"/>
        <end position="356"/>
    </location>
</feature>
<feature type="region of interest" description="Disordered" evidence="6">
    <location>
        <begin position="1"/>
        <end position="29"/>
    </location>
</feature>
<feature type="region of interest" description="Disordered" evidence="6">
    <location>
        <begin position="362"/>
        <end position="548"/>
    </location>
</feature>
<feature type="region of interest" description="Disordered" evidence="6">
    <location>
        <begin position="719"/>
        <end position="778"/>
    </location>
</feature>
<feature type="compositionally biased region" description="Gly residues" evidence="6">
    <location>
        <begin position="1"/>
        <end position="12"/>
    </location>
</feature>
<feature type="compositionally biased region" description="Basic and acidic residues" evidence="6">
    <location>
        <begin position="362"/>
        <end position="383"/>
    </location>
</feature>
<feature type="compositionally biased region" description="Low complexity" evidence="6">
    <location>
        <begin position="430"/>
        <end position="457"/>
    </location>
</feature>
<feature type="compositionally biased region" description="Pro residues" evidence="6">
    <location>
        <begin position="491"/>
        <end position="508"/>
    </location>
</feature>
<feature type="compositionally biased region" description="Low complexity" evidence="6">
    <location>
        <begin position="509"/>
        <end position="533"/>
    </location>
</feature>
<feature type="active site" description="Proton acceptor" evidence="3 5">
    <location>
        <position position="156"/>
    </location>
</feature>
<feature type="binding site" evidence="3">
    <location>
        <begin position="40"/>
        <end position="48"/>
    </location>
    <ligand>
        <name>ATP</name>
        <dbReference type="ChEBI" id="CHEBI:30616"/>
    </ligand>
</feature>
<feature type="binding site" evidence="3">
    <location>
        <position position="63"/>
    </location>
    <ligand>
        <name>ATP</name>
        <dbReference type="ChEBI" id="CHEBI:30616"/>
    </ligand>
</feature>
<feature type="modified residue" description="Phosphothreonine; by LKB1" evidence="8">
    <location>
        <position position="189"/>
    </location>
</feature>
<feature type="modified residue" description="Phosphoserine" evidence="10">
    <location>
        <position position="193"/>
    </location>
</feature>
<feature type="modified residue" description="Phosphoserine" evidence="2">
    <location>
        <position position="399"/>
    </location>
</feature>
<feature type="modified residue" description="Phosphoserine" evidence="12">
    <location>
        <position position="443"/>
    </location>
</feature>
<feature type="modified residue" description="Phosphoserine" evidence="2">
    <location>
        <position position="447"/>
    </location>
</feature>
<feature type="modified residue" description="Phosphoserine" evidence="12">
    <location>
        <position position="450"/>
    </location>
</feature>
<feature type="modified residue" description="Omega-N-methylarginine" evidence="2">
    <location>
        <position position="466"/>
    </location>
</feature>
<feature type="modified residue" description="Omega-N-methylarginine" evidence="2">
    <location>
        <position position="481"/>
    </location>
</feature>
<feature type="modified residue" description="Omega-N-methylarginine" evidence="2">
    <location>
        <position position="484"/>
    </location>
</feature>
<feature type="modified residue" description="Omega-N-methylarginine" evidence="2">
    <location>
        <position position="498"/>
    </location>
</feature>
<feature type="modified residue" description="Phosphoserine" evidence="12">
    <location>
        <position position="508"/>
    </location>
</feature>
<feature type="modified residue" description="Omega-N-methylarginine" evidence="2">
    <location>
        <position position="525"/>
    </location>
</feature>
<feature type="modified residue" description="Phosphothreonine" evidence="2">
    <location>
        <position position="529"/>
    </location>
</feature>
<feature type="modified residue" description="Phosphothreonine" evidence="2">
    <location>
        <position position="535"/>
    </location>
</feature>
<feature type="modified residue" description="Omega-N-methylarginine" evidence="2">
    <location>
        <position position="550"/>
    </location>
</feature>
<feature type="modified residue" description="Phosphothreonine" evidence="12">
    <location>
        <position position="583"/>
    </location>
</feature>
<feature type="modified residue" description="Phosphoserine" evidence="12">
    <location>
        <position position="586"/>
    </location>
</feature>
<feature type="modified residue" description="Phosphoserine" evidence="12">
    <location>
        <position position="587"/>
    </location>
</feature>
<feature type="modified residue" description="Phosphoserine" evidence="12">
    <location>
        <position position="601"/>
    </location>
</feature>
<feature type="mutagenesis site" description="Abolishes kinase activity." evidence="7">
    <original>K</original>
    <variation>R</variation>
    <location>
        <position position="63"/>
    </location>
</feature>
<feature type="mutagenesis site" description="Decreased autophosphorylation; when associated with A-193." evidence="7">
    <original>T</original>
    <variation>A</variation>
    <location>
        <position position="189"/>
    </location>
</feature>
<feature type="mutagenesis site" description="Decreased autophosphorylation; when associated with A-189." evidence="7">
    <original>S</original>
    <variation>A</variation>
    <location>
        <position position="193"/>
    </location>
</feature>
<reference key="1">
    <citation type="journal article" date="2008" name="Biochemistry">
        <title>Activation of SAD kinase by Ca2+/calmodulin-dependent protein kinase kinase.</title>
        <authorList>
            <person name="Fujimoto T."/>
            <person name="Yurimoto S."/>
            <person name="Hatano N."/>
            <person name="Nozaki N."/>
            <person name="Sueyoshi N."/>
            <person name="Kameshita I."/>
            <person name="Mizutani A."/>
            <person name="Mikoshiba K."/>
            <person name="Kobayashi R."/>
            <person name="Tokumitsu H."/>
        </authorList>
    </citation>
    <scope>NUCLEOTIDE SEQUENCE [MRNA]</scope>
    <scope>PHOSPHORYLATION AT THR-189</scope>
    <source>
        <strain>Sprague-Dawley</strain>
        <tissue>Brain</tissue>
    </source>
</reference>
<reference key="2">
    <citation type="journal article" date="2004" name="Nature">
        <title>Genome sequence of the Brown Norway rat yields insights into mammalian evolution.</title>
        <authorList>
            <person name="Gibbs R.A."/>
            <person name="Weinstock G.M."/>
            <person name="Metzker M.L."/>
            <person name="Muzny D.M."/>
            <person name="Sodergren E.J."/>
            <person name="Scherer S."/>
            <person name="Scott G."/>
            <person name="Steffen D."/>
            <person name="Worley K.C."/>
            <person name="Burch P.E."/>
            <person name="Okwuonu G."/>
            <person name="Hines S."/>
            <person name="Lewis L."/>
            <person name="Deramo C."/>
            <person name="Delgado O."/>
            <person name="Dugan-Rocha S."/>
            <person name="Miner G."/>
            <person name="Morgan M."/>
            <person name="Hawes A."/>
            <person name="Gill R."/>
            <person name="Holt R.A."/>
            <person name="Adams M.D."/>
            <person name="Amanatides P.G."/>
            <person name="Baden-Tillson H."/>
            <person name="Barnstead M."/>
            <person name="Chin S."/>
            <person name="Evans C.A."/>
            <person name="Ferriera S."/>
            <person name="Fosler C."/>
            <person name="Glodek A."/>
            <person name="Gu Z."/>
            <person name="Jennings D."/>
            <person name="Kraft C.L."/>
            <person name="Nguyen T."/>
            <person name="Pfannkoch C.M."/>
            <person name="Sitter C."/>
            <person name="Sutton G.G."/>
            <person name="Venter J.C."/>
            <person name="Woodage T."/>
            <person name="Smith D."/>
            <person name="Lee H.-M."/>
            <person name="Gustafson E."/>
            <person name="Cahill P."/>
            <person name="Kana A."/>
            <person name="Doucette-Stamm L."/>
            <person name="Weinstock K."/>
            <person name="Fechtel K."/>
            <person name="Weiss R.B."/>
            <person name="Dunn D.M."/>
            <person name="Green E.D."/>
            <person name="Blakesley R.W."/>
            <person name="Bouffard G.G."/>
            <person name="De Jong P.J."/>
            <person name="Osoegawa K."/>
            <person name="Zhu B."/>
            <person name="Marra M."/>
            <person name="Schein J."/>
            <person name="Bosdet I."/>
            <person name="Fjell C."/>
            <person name="Jones S."/>
            <person name="Krzywinski M."/>
            <person name="Mathewson C."/>
            <person name="Siddiqui A."/>
            <person name="Wye N."/>
            <person name="McPherson J."/>
            <person name="Zhao S."/>
            <person name="Fraser C.M."/>
            <person name="Shetty J."/>
            <person name="Shatsman S."/>
            <person name="Geer K."/>
            <person name="Chen Y."/>
            <person name="Abramzon S."/>
            <person name="Nierman W.C."/>
            <person name="Havlak P.H."/>
            <person name="Chen R."/>
            <person name="Durbin K.J."/>
            <person name="Egan A."/>
            <person name="Ren Y."/>
            <person name="Song X.-Z."/>
            <person name="Li B."/>
            <person name="Liu Y."/>
            <person name="Qin X."/>
            <person name="Cawley S."/>
            <person name="Cooney A.J."/>
            <person name="D'Souza L.M."/>
            <person name="Martin K."/>
            <person name="Wu J.Q."/>
            <person name="Gonzalez-Garay M.L."/>
            <person name="Jackson A.R."/>
            <person name="Kalafus K.J."/>
            <person name="McLeod M.P."/>
            <person name="Milosavljevic A."/>
            <person name="Virk D."/>
            <person name="Volkov A."/>
            <person name="Wheeler D.A."/>
            <person name="Zhang Z."/>
            <person name="Bailey J.A."/>
            <person name="Eichler E.E."/>
            <person name="Tuzun E."/>
            <person name="Birney E."/>
            <person name="Mongin E."/>
            <person name="Ureta-Vidal A."/>
            <person name="Woodwark C."/>
            <person name="Zdobnov E."/>
            <person name="Bork P."/>
            <person name="Suyama M."/>
            <person name="Torrents D."/>
            <person name="Alexandersson M."/>
            <person name="Trask B.J."/>
            <person name="Young J.M."/>
            <person name="Huang H."/>
            <person name="Wang H."/>
            <person name="Xing H."/>
            <person name="Daniels S."/>
            <person name="Gietzen D."/>
            <person name="Schmidt J."/>
            <person name="Stevens K."/>
            <person name="Vitt U."/>
            <person name="Wingrove J."/>
            <person name="Camara F."/>
            <person name="Mar Alba M."/>
            <person name="Abril J.F."/>
            <person name="Guigo R."/>
            <person name="Smit A."/>
            <person name="Dubchak I."/>
            <person name="Rubin E.M."/>
            <person name="Couronne O."/>
            <person name="Poliakov A."/>
            <person name="Huebner N."/>
            <person name="Ganten D."/>
            <person name="Goesele C."/>
            <person name="Hummel O."/>
            <person name="Kreitler T."/>
            <person name="Lee Y.-A."/>
            <person name="Monti J."/>
            <person name="Schulz H."/>
            <person name="Zimdahl H."/>
            <person name="Himmelbauer H."/>
            <person name="Lehrach H."/>
            <person name="Jacob H.J."/>
            <person name="Bromberg S."/>
            <person name="Gullings-Handley J."/>
            <person name="Jensen-Seaman M.I."/>
            <person name="Kwitek A.E."/>
            <person name="Lazar J."/>
            <person name="Pasko D."/>
            <person name="Tonellato P.J."/>
            <person name="Twigger S."/>
            <person name="Ponting C.P."/>
            <person name="Duarte J.M."/>
            <person name="Rice S."/>
            <person name="Goodstadt L."/>
            <person name="Beatson S.A."/>
            <person name="Emes R.D."/>
            <person name="Winter E.E."/>
            <person name="Webber C."/>
            <person name="Brandt P."/>
            <person name="Nyakatura G."/>
            <person name="Adetobi M."/>
            <person name="Chiaromonte F."/>
            <person name="Elnitski L."/>
            <person name="Eswara P."/>
            <person name="Hardison R.C."/>
            <person name="Hou M."/>
            <person name="Kolbe D."/>
            <person name="Makova K."/>
            <person name="Miller W."/>
            <person name="Nekrutenko A."/>
            <person name="Riemer C."/>
            <person name="Schwartz S."/>
            <person name="Taylor J."/>
            <person name="Yang S."/>
            <person name="Zhang Y."/>
            <person name="Lindpaintner K."/>
            <person name="Andrews T.D."/>
            <person name="Caccamo M."/>
            <person name="Clamp M."/>
            <person name="Clarke L."/>
            <person name="Curwen V."/>
            <person name="Durbin R.M."/>
            <person name="Eyras E."/>
            <person name="Searle S.M."/>
            <person name="Cooper G.M."/>
            <person name="Batzoglou S."/>
            <person name="Brudno M."/>
            <person name="Sidow A."/>
            <person name="Stone E.A."/>
            <person name="Payseur B.A."/>
            <person name="Bourque G."/>
            <person name="Lopez-Otin C."/>
            <person name="Puente X.S."/>
            <person name="Chakrabarti K."/>
            <person name="Chatterji S."/>
            <person name="Dewey C."/>
            <person name="Pachter L."/>
            <person name="Bray N."/>
            <person name="Yap V.B."/>
            <person name="Caspi A."/>
            <person name="Tesler G."/>
            <person name="Pevzner P.A."/>
            <person name="Haussler D."/>
            <person name="Roskin K.M."/>
            <person name="Baertsch R."/>
            <person name="Clawson H."/>
            <person name="Furey T.S."/>
            <person name="Hinrichs A.S."/>
            <person name="Karolchik D."/>
            <person name="Kent W.J."/>
            <person name="Rosenbloom K.R."/>
            <person name="Trumbower H."/>
            <person name="Weirauch M."/>
            <person name="Cooper D.N."/>
            <person name="Stenson P.D."/>
            <person name="Ma B."/>
            <person name="Brent M."/>
            <person name="Arumugam M."/>
            <person name="Shteynberg D."/>
            <person name="Copley R.R."/>
            <person name="Taylor M.S."/>
            <person name="Riethman H."/>
            <person name="Mudunuri U."/>
            <person name="Peterson J."/>
            <person name="Guyer M."/>
            <person name="Felsenfeld A."/>
            <person name="Old S."/>
            <person name="Mockrin S."/>
            <person name="Collins F.S."/>
        </authorList>
    </citation>
    <scope>NUCLEOTIDE SEQUENCE [LARGE SCALE GENOMIC DNA]</scope>
    <source>
        <strain>Brown Norway</strain>
    </source>
</reference>
<reference key="3">
    <citation type="journal article" date="2006" name="Neuron">
        <title>SAD: a presynaptic kinase associated with synaptic vesicles and the active zone cytomatrix that regulates neurotransmitter release.</title>
        <authorList>
            <person name="Inoue E."/>
            <person name="Mochida S."/>
            <person name="Takagi H."/>
            <person name="Higa S."/>
            <person name="Deguchi-Tawarada M."/>
            <person name="Takao-Rikitsu E."/>
            <person name="Inoue M."/>
            <person name="Yao I."/>
            <person name="Takeuchi K."/>
            <person name="Kitajima I."/>
            <person name="Setou M."/>
            <person name="Ohtsuka T."/>
            <person name="Takai Y."/>
        </authorList>
    </citation>
    <scope>FUNCTION</scope>
    <scope>SUBCELLULAR LOCATION</scope>
    <scope>AUTOPHOSPHORYLATION</scope>
    <scope>TISSUE SPECIFICITY</scope>
    <scope>MUTAGENESIS OF LYS-63; THR-189 AND SER-193</scope>
</reference>
<reference key="4">
    <citation type="journal article" date="2008" name="Genes Dev.">
        <title>Tuberous sclerosis complex proteins control axon formation.</title>
        <authorList>
            <person name="Choi Y.J."/>
            <person name="Di Nardo A."/>
            <person name="Kramvis I."/>
            <person name="Meikle L."/>
            <person name="Kwiatkowski D.J."/>
            <person name="Sahin M."/>
            <person name="He X."/>
        </authorList>
    </citation>
    <scope>REGULATION OF TRANSLATION</scope>
</reference>
<reference key="5">
    <citation type="journal article" date="2012" name="Nat. Commun.">
        <title>Quantitative maps of protein phosphorylation sites across 14 different rat organs and tissues.</title>
        <authorList>
            <person name="Lundby A."/>
            <person name="Secher A."/>
            <person name="Lage K."/>
            <person name="Nordsborg N.B."/>
            <person name="Dmytriyev A."/>
            <person name="Lundby C."/>
            <person name="Olsen J.V."/>
        </authorList>
    </citation>
    <scope>PHOSPHORYLATION [LARGE SCALE ANALYSIS] AT SER-443; SER-450; SER-508; THR-583; SER-586; SER-587 AND SER-601</scope>
    <scope>IDENTIFICATION BY MASS SPECTROMETRY [LARGE SCALE ANALYSIS]</scope>
</reference>
<name>BRSK1_RAT</name>
<accession>B2DD29</accession>
<accession>F1M6Y8</accession>
<sequence>MSSGSKEGGGGSPAYHLPHPHPHPPQHAQYVGPYRLEKTLGKGQTGLVKLGVHCITGQKVAVKIVNREKLSESVLMKVEREIAILKLIEHPHVLKLHDVYENKKYLYLVLEHVSGGELFDYLVKKGRLTPKEARKFFRQIVSALDFCHSYSICHRDLKPENLLLDEKNNIRIADFGMASLQVGDSLLETSCGSPHYACPEVIKGEKYDGRRADMWSCGVILFALLVGALPFDDDNLRQLLEKVKRGVFHMPHFIPPDCQSLLRGMIEVEPEKRLSLEQIQKHPWYLGGKHEPDPCLEPAPGRRVAMRSLPSNGELDPDVLESMASLGCFRDRERLHRELRSEEENQEKMIYYLLLDRKERYPSCEDQDLPPRNDVDPPRKRVDSPMLSRHGKRRPERKSMEVLSITDAGSGGSPVPTRRALEMAQHSQRSRSVSGASTGLSSSPLSSPRSPVFSFSPEPGVGDEARGGGSPTSKTQTLPSRGPRGGGAGEQPPPPSARSTPLPGPPGSPRSSGGTPLHSPLHTPRASPTGTPGTTPPPSPGGGVGGAAWRSRLNSIRNSFLGSPRFHRRKMQVPTAEEMSSLTPESSPELAKRSWFGNFISLDKEEQIFLVLKDKPLSSIKADIVHAFLSIPSLSHSVLSQTSFRAEYKASGGPSVFQKPVRFQVDISSSEGPEPSPRRDGSSGGGIYSVTFTLISGPSRRFKRVVETIQAQLLSTHDQPSVQALADEKNGAQTRPAGTPPRSLQPPPGRPDPDLSSSPRRGPSKDKKLLATNGTPLP</sequence>
<evidence type="ECO:0000250" key="1"/>
<evidence type="ECO:0000250" key="2">
    <source>
        <dbReference type="UniProtKB" id="Q5RJI5"/>
    </source>
</evidence>
<evidence type="ECO:0000255" key="3">
    <source>
        <dbReference type="PROSITE-ProRule" id="PRU00159"/>
    </source>
</evidence>
<evidence type="ECO:0000255" key="4">
    <source>
        <dbReference type="PROSITE-ProRule" id="PRU00212"/>
    </source>
</evidence>
<evidence type="ECO:0000255" key="5">
    <source>
        <dbReference type="PROSITE-ProRule" id="PRU10027"/>
    </source>
</evidence>
<evidence type="ECO:0000256" key="6">
    <source>
        <dbReference type="SAM" id="MobiDB-lite"/>
    </source>
</evidence>
<evidence type="ECO:0000269" key="7">
    <source>
    </source>
</evidence>
<evidence type="ECO:0000269" key="8">
    <source>
    </source>
</evidence>
<evidence type="ECO:0000303" key="9">
    <source>
    </source>
</evidence>
<evidence type="ECO:0000305" key="10"/>
<evidence type="ECO:0000305" key="11">
    <source>
    </source>
</evidence>
<evidence type="ECO:0007744" key="12">
    <source>
    </source>
</evidence>
<comment type="function">
    <text evidence="1 7">Serine/threonine-protein kinase that plays a key role in polarization of neurons and centrosome duplication. Phosphorylates CDC25B, CDC25C, MAPT/TAU, RIMS1, TUBG1, TUBG2 and WEE1. Following phosphorylation and activation by STK11/LKB1, acts as a key regulator of polarization of cortical neurons, probably by mediating phosphorylation of microtubule-associated proteins such as MAPT/TAU at 'Thr-523' and 'Ser-573'. Also regulates neuron polarization by mediating phosphorylation of WEE1 at 'Ser-642' in postmitotic neurons, leading to down-regulate WEE1 activity in polarized neurons. Also acts as a positive regulator of centrosome duplication by mediating phosphorylation of gamma-tubulin (TUBG1 and TUBG2) at 'Ser-131', leading to translocation of gamma-tubulin and its associated proteins to the centrosome. Involved in the UV-induced DNA damage checkpoint response, probably by inhibiting CDK1 activity through phosphorylation and activation of WEE1, and inhibition of CDC25B and CDC25C (By similarity). In neurons, localizes to synaptic vesicles and plays a role in neurotransmitter release, possibly by phosphorylating RIMS1.</text>
</comment>
<comment type="catalytic activity">
    <reaction>
        <text>L-seryl-[protein] + ATP = O-phospho-L-seryl-[protein] + ADP + H(+)</text>
        <dbReference type="Rhea" id="RHEA:17989"/>
        <dbReference type="Rhea" id="RHEA-COMP:9863"/>
        <dbReference type="Rhea" id="RHEA-COMP:11604"/>
        <dbReference type="ChEBI" id="CHEBI:15378"/>
        <dbReference type="ChEBI" id="CHEBI:29999"/>
        <dbReference type="ChEBI" id="CHEBI:30616"/>
        <dbReference type="ChEBI" id="CHEBI:83421"/>
        <dbReference type="ChEBI" id="CHEBI:456216"/>
        <dbReference type="EC" id="2.7.11.1"/>
    </reaction>
</comment>
<comment type="catalytic activity">
    <reaction>
        <text>L-threonyl-[protein] + ATP = O-phospho-L-threonyl-[protein] + ADP + H(+)</text>
        <dbReference type="Rhea" id="RHEA:46608"/>
        <dbReference type="Rhea" id="RHEA-COMP:11060"/>
        <dbReference type="Rhea" id="RHEA-COMP:11605"/>
        <dbReference type="ChEBI" id="CHEBI:15378"/>
        <dbReference type="ChEBI" id="CHEBI:30013"/>
        <dbReference type="ChEBI" id="CHEBI:30616"/>
        <dbReference type="ChEBI" id="CHEBI:61977"/>
        <dbReference type="ChEBI" id="CHEBI:456216"/>
        <dbReference type="EC" id="2.7.11.1"/>
    </reaction>
</comment>
<comment type="catalytic activity">
    <reaction>
        <text>L-seryl-[tau protein] + ATP = O-phospho-L-seryl-[tau protein] + ADP + H(+)</text>
        <dbReference type="Rhea" id="RHEA:12801"/>
        <dbReference type="Rhea" id="RHEA-COMP:13701"/>
        <dbReference type="Rhea" id="RHEA-COMP:13702"/>
        <dbReference type="ChEBI" id="CHEBI:15378"/>
        <dbReference type="ChEBI" id="CHEBI:29999"/>
        <dbReference type="ChEBI" id="CHEBI:30616"/>
        <dbReference type="ChEBI" id="CHEBI:83421"/>
        <dbReference type="ChEBI" id="CHEBI:456216"/>
        <dbReference type="EC" id="2.7.11.26"/>
    </reaction>
</comment>
<comment type="catalytic activity">
    <reaction>
        <text>L-threonyl-[tau protein] + ATP = O-phospho-L-threonyl-[tau protein] + ADP + H(+)</text>
        <dbReference type="Rhea" id="RHEA:53904"/>
        <dbReference type="Rhea" id="RHEA-COMP:13703"/>
        <dbReference type="Rhea" id="RHEA-COMP:13704"/>
        <dbReference type="ChEBI" id="CHEBI:15378"/>
        <dbReference type="ChEBI" id="CHEBI:30013"/>
        <dbReference type="ChEBI" id="CHEBI:30616"/>
        <dbReference type="ChEBI" id="CHEBI:61977"/>
        <dbReference type="ChEBI" id="CHEBI:456216"/>
        <dbReference type="EC" id="2.7.11.26"/>
    </reaction>
</comment>
<comment type="cofactor">
    <cofactor evidence="1">
        <name>Mg(2+)</name>
        <dbReference type="ChEBI" id="CHEBI:18420"/>
    </cofactor>
</comment>
<comment type="activity regulation">
    <text>Activated by phosphorylation on Thr-189 by STK11/LKB1.</text>
</comment>
<comment type="subcellular location">
    <subcellularLocation>
        <location evidence="1">Cytoplasm</location>
    </subcellularLocation>
    <subcellularLocation>
        <location evidence="1">Nucleus</location>
    </subcellularLocation>
    <subcellularLocation>
        <location evidence="1">Cytoplasm</location>
        <location evidence="1">Cytoskeleton</location>
        <location evidence="1">Microtubule organizing center</location>
        <location evidence="1">Centrosome</location>
    </subcellularLocation>
    <subcellularLocation>
        <location evidence="7">Synapse</location>
    </subcellularLocation>
    <subcellularLocation>
        <location evidence="7">Presynaptic active zone</location>
    </subcellularLocation>
    <subcellularLocation>
        <location evidence="7">Cytoplasmic vesicle</location>
        <location evidence="7">Secretory vesicle</location>
        <location evidence="7">Synaptic vesicle</location>
    </subcellularLocation>
    <text evidence="1">Nuclear in the absence of DNA damage. Translocated to the nucleus in response to UV- or MMS-induced DNA damage (By similarity).</text>
</comment>
<comment type="tissue specificity">
    <text evidence="7">Mainly present in brain. Present in presynaptic nerve terminals (at protein level).</text>
</comment>
<comment type="PTM">
    <text evidence="8">Phosphorylated at Thr-189 by STK11/LKB1 in complex with STE20-related adapter-alpha (STRADA) pseudo kinase and CAB39. Not phosphorylated at Thr-189 by CaMKK2. In contrast, it is phosphorylated and activated by CaMKK1. May be inactivated via dephosphorylation of Thr-189 by PP2C. May be autophosphorylated.</text>
</comment>
<comment type="miscellaneous">
    <text evidence="11">Protein synthesis is inhibited by the TSC1-TSC2 complex acting through TORC1 in neurons, leading to regulate neuron polarization.</text>
</comment>
<comment type="similarity">
    <text evidence="10">Belongs to the protein kinase superfamily. CAMK Ser/Thr protein kinase family. SNF1 subfamily.</text>
</comment>
<gene>
    <name type="primary">Brsk1</name>
    <name evidence="9" type="synonym">Sadb</name>
</gene>
<keyword id="KW-0067">ATP-binding</keyword>
<keyword id="KW-0131">Cell cycle</keyword>
<keyword id="KW-0966">Cell projection</keyword>
<keyword id="KW-0963">Cytoplasm</keyword>
<keyword id="KW-0968">Cytoplasmic vesicle</keyword>
<keyword id="KW-0206">Cytoskeleton</keyword>
<keyword id="KW-0227">DNA damage</keyword>
<keyword id="KW-0418">Kinase</keyword>
<keyword id="KW-0460">Magnesium</keyword>
<keyword id="KW-0479">Metal-binding</keyword>
<keyword id="KW-0488">Methylation</keyword>
<keyword id="KW-0524">Neurogenesis</keyword>
<keyword id="KW-0547">Nucleotide-binding</keyword>
<keyword id="KW-0539">Nucleus</keyword>
<keyword id="KW-0597">Phosphoprotein</keyword>
<keyword id="KW-1185">Reference proteome</keyword>
<keyword id="KW-0723">Serine/threonine-protein kinase</keyword>
<keyword id="KW-0770">Synapse</keyword>
<keyword id="KW-0808">Transferase</keyword>
<proteinExistence type="evidence at protein level"/>
<protein>
    <recommendedName>
        <fullName>Serine/threonine-protein kinase BRSK1</fullName>
        <ecNumber>2.7.11.1</ecNumber>
        <ecNumber>2.7.11.26</ecNumber>
    </recommendedName>
    <alternativeName>
        <fullName>Brain-specific serine/threonine-protein kinase 1</fullName>
        <shortName>BR serine/threonine-protein kinase 1</shortName>
    </alternativeName>
    <alternativeName>
        <fullName evidence="9">Serine/threonine-protein kinase SAD-B</fullName>
    </alternativeName>
</protein>